<dbReference type="EC" id="2.7.7.6" evidence="1"/>
<dbReference type="EMBL" id="AP009389">
    <property type="protein sequence ID" value="BAF58494.1"/>
    <property type="molecule type" value="Genomic_DNA"/>
</dbReference>
<dbReference type="SMR" id="A5D5I3"/>
<dbReference type="STRING" id="370438.PTH_0313"/>
<dbReference type="KEGG" id="pth:PTH_0313"/>
<dbReference type="eggNOG" id="COG0086">
    <property type="taxonomic scope" value="Bacteria"/>
</dbReference>
<dbReference type="HOGENOM" id="CLU_000524_3_1_9"/>
<dbReference type="Proteomes" id="UP000006556">
    <property type="component" value="Chromosome"/>
</dbReference>
<dbReference type="GO" id="GO:0000428">
    <property type="term" value="C:DNA-directed RNA polymerase complex"/>
    <property type="evidence" value="ECO:0007669"/>
    <property type="project" value="UniProtKB-KW"/>
</dbReference>
<dbReference type="GO" id="GO:0003677">
    <property type="term" value="F:DNA binding"/>
    <property type="evidence" value="ECO:0007669"/>
    <property type="project" value="UniProtKB-UniRule"/>
</dbReference>
<dbReference type="GO" id="GO:0003899">
    <property type="term" value="F:DNA-directed RNA polymerase activity"/>
    <property type="evidence" value="ECO:0007669"/>
    <property type="project" value="UniProtKB-UniRule"/>
</dbReference>
<dbReference type="GO" id="GO:0000287">
    <property type="term" value="F:magnesium ion binding"/>
    <property type="evidence" value="ECO:0007669"/>
    <property type="project" value="UniProtKB-UniRule"/>
</dbReference>
<dbReference type="GO" id="GO:0008270">
    <property type="term" value="F:zinc ion binding"/>
    <property type="evidence" value="ECO:0007669"/>
    <property type="project" value="UniProtKB-UniRule"/>
</dbReference>
<dbReference type="GO" id="GO:0006351">
    <property type="term" value="P:DNA-templated transcription"/>
    <property type="evidence" value="ECO:0007669"/>
    <property type="project" value="UniProtKB-UniRule"/>
</dbReference>
<dbReference type="CDD" id="cd02655">
    <property type="entry name" value="RNAP_beta'_C"/>
    <property type="match status" value="1"/>
</dbReference>
<dbReference type="CDD" id="cd01609">
    <property type="entry name" value="RNAP_beta'_N"/>
    <property type="match status" value="1"/>
</dbReference>
<dbReference type="FunFam" id="1.10.132.30:FF:000003">
    <property type="entry name" value="DNA-directed RNA polymerase subunit beta"/>
    <property type="match status" value="1"/>
</dbReference>
<dbReference type="FunFam" id="1.10.150.390:FF:000002">
    <property type="entry name" value="DNA-directed RNA polymerase subunit beta"/>
    <property type="match status" value="1"/>
</dbReference>
<dbReference type="FunFam" id="1.10.40.90:FF:000001">
    <property type="entry name" value="DNA-directed RNA polymerase subunit beta"/>
    <property type="match status" value="1"/>
</dbReference>
<dbReference type="FunFam" id="4.10.860.120:FF:000001">
    <property type="entry name" value="DNA-directed RNA polymerase subunit beta"/>
    <property type="match status" value="1"/>
</dbReference>
<dbReference type="Gene3D" id="1.10.132.30">
    <property type="match status" value="1"/>
</dbReference>
<dbReference type="Gene3D" id="1.10.150.390">
    <property type="match status" value="1"/>
</dbReference>
<dbReference type="Gene3D" id="1.10.1790.20">
    <property type="match status" value="1"/>
</dbReference>
<dbReference type="Gene3D" id="1.10.40.90">
    <property type="match status" value="1"/>
</dbReference>
<dbReference type="Gene3D" id="2.40.40.20">
    <property type="match status" value="1"/>
</dbReference>
<dbReference type="Gene3D" id="2.40.50.100">
    <property type="match status" value="1"/>
</dbReference>
<dbReference type="Gene3D" id="4.10.860.120">
    <property type="entry name" value="RNA polymerase II, clamp domain"/>
    <property type="match status" value="1"/>
</dbReference>
<dbReference type="Gene3D" id="1.10.274.100">
    <property type="entry name" value="RNA polymerase Rpb1, domain 3"/>
    <property type="match status" value="2"/>
</dbReference>
<dbReference type="HAMAP" id="MF_01322">
    <property type="entry name" value="RNApol_bact_RpoC"/>
    <property type="match status" value="1"/>
</dbReference>
<dbReference type="InterPro" id="IPR012756">
    <property type="entry name" value="DNA-dir_RpoC2_beta_pp"/>
</dbReference>
<dbReference type="InterPro" id="IPR045867">
    <property type="entry name" value="DNA-dir_RpoC_beta_prime"/>
</dbReference>
<dbReference type="InterPro" id="IPR012754">
    <property type="entry name" value="DNA-dir_RpoC_beta_prime_bact"/>
</dbReference>
<dbReference type="InterPro" id="IPR000722">
    <property type="entry name" value="RNA_pol_asu"/>
</dbReference>
<dbReference type="InterPro" id="IPR006592">
    <property type="entry name" value="RNA_pol_N"/>
</dbReference>
<dbReference type="InterPro" id="IPR007080">
    <property type="entry name" value="RNA_pol_Rpb1_1"/>
</dbReference>
<dbReference type="InterPro" id="IPR007066">
    <property type="entry name" value="RNA_pol_Rpb1_3"/>
</dbReference>
<dbReference type="InterPro" id="IPR042102">
    <property type="entry name" value="RNA_pol_Rpb1_3_sf"/>
</dbReference>
<dbReference type="InterPro" id="IPR007083">
    <property type="entry name" value="RNA_pol_Rpb1_4"/>
</dbReference>
<dbReference type="InterPro" id="IPR007081">
    <property type="entry name" value="RNA_pol_Rpb1_5"/>
</dbReference>
<dbReference type="InterPro" id="IPR044893">
    <property type="entry name" value="RNA_pol_Rpb1_clamp_domain"/>
</dbReference>
<dbReference type="InterPro" id="IPR038120">
    <property type="entry name" value="Rpb1_funnel_sf"/>
</dbReference>
<dbReference type="NCBIfam" id="NF011498">
    <property type="entry name" value="PRK14906.1"/>
    <property type="match status" value="1"/>
</dbReference>
<dbReference type="NCBIfam" id="TIGR02388">
    <property type="entry name" value="rpoC2_cyan"/>
    <property type="match status" value="1"/>
</dbReference>
<dbReference type="NCBIfam" id="TIGR02386">
    <property type="entry name" value="rpoC_TIGR"/>
    <property type="match status" value="1"/>
</dbReference>
<dbReference type="PANTHER" id="PTHR19376">
    <property type="entry name" value="DNA-DIRECTED RNA POLYMERASE"/>
    <property type="match status" value="1"/>
</dbReference>
<dbReference type="PANTHER" id="PTHR19376:SF54">
    <property type="entry name" value="DNA-DIRECTED RNA POLYMERASE SUBUNIT BETA"/>
    <property type="match status" value="1"/>
</dbReference>
<dbReference type="Pfam" id="PF04997">
    <property type="entry name" value="RNA_pol_Rpb1_1"/>
    <property type="match status" value="1"/>
</dbReference>
<dbReference type="Pfam" id="PF00623">
    <property type="entry name" value="RNA_pol_Rpb1_2"/>
    <property type="match status" value="1"/>
</dbReference>
<dbReference type="Pfam" id="PF04983">
    <property type="entry name" value="RNA_pol_Rpb1_3"/>
    <property type="match status" value="1"/>
</dbReference>
<dbReference type="Pfam" id="PF05000">
    <property type="entry name" value="RNA_pol_Rpb1_4"/>
    <property type="match status" value="1"/>
</dbReference>
<dbReference type="Pfam" id="PF04998">
    <property type="entry name" value="RNA_pol_Rpb1_5"/>
    <property type="match status" value="2"/>
</dbReference>
<dbReference type="SMART" id="SM00663">
    <property type="entry name" value="RPOLA_N"/>
    <property type="match status" value="1"/>
</dbReference>
<dbReference type="SUPFAM" id="SSF64484">
    <property type="entry name" value="beta and beta-prime subunits of DNA dependent RNA-polymerase"/>
    <property type="match status" value="1"/>
</dbReference>
<comment type="function">
    <text evidence="1">DNA-dependent RNA polymerase catalyzes the transcription of DNA into RNA using the four ribonucleoside triphosphates as substrates.</text>
</comment>
<comment type="catalytic activity">
    <reaction evidence="1">
        <text>RNA(n) + a ribonucleoside 5'-triphosphate = RNA(n+1) + diphosphate</text>
        <dbReference type="Rhea" id="RHEA:21248"/>
        <dbReference type="Rhea" id="RHEA-COMP:14527"/>
        <dbReference type="Rhea" id="RHEA-COMP:17342"/>
        <dbReference type="ChEBI" id="CHEBI:33019"/>
        <dbReference type="ChEBI" id="CHEBI:61557"/>
        <dbReference type="ChEBI" id="CHEBI:140395"/>
        <dbReference type="EC" id="2.7.7.6"/>
    </reaction>
</comment>
<comment type="cofactor">
    <cofactor evidence="1">
        <name>Mg(2+)</name>
        <dbReference type="ChEBI" id="CHEBI:18420"/>
    </cofactor>
    <text evidence="1">Binds 1 Mg(2+) ion per subunit.</text>
</comment>
<comment type="cofactor">
    <cofactor evidence="1">
        <name>Zn(2+)</name>
        <dbReference type="ChEBI" id="CHEBI:29105"/>
    </cofactor>
    <text evidence="1">Binds 2 Zn(2+) ions per subunit.</text>
</comment>
<comment type="subunit">
    <text evidence="1">The RNAP catalytic core consists of 2 alpha, 1 beta, 1 beta' and 1 omega subunit. When a sigma factor is associated with the core the holoenzyme is formed, which can initiate transcription.</text>
</comment>
<comment type="similarity">
    <text evidence="1">Belongs to the RNA polymerase beta' chain family.</text>
</comment>
<organism>
    <name type="scientific">Pelotomaculum thermopropionicum (strain DSM 13744 / JCM 10971 / SI)</name>
    <dbReference type="NCBI Taxonomy" id="370438"/>
    <lineage>
        <taxon>Bacteria</taxon>
        <taxon>Bacillati</taxon>
        <taxon>Bacillota</taxon>
        <taxon>Clostridia</taxon>
        <taxon>Eubacteriales</taxon>
        <taxon>Desulfotomaculaceae</taxon>
        <taxon>Pelotomaculum</taxon>
    </lineage>
</organism>
<keyword id="KW-0240">DNA-directed RNA polymerase</keyword>
<keyword id="KW-0460">Magnesium</keyword>
<keyword id="KW-0479">Metal-binding</keyword>
<keyword id="KW-0548">Nucleotidyltransferase</keyword>
<keyword id="KW-1185">Reference proteome</keyword>
<keyword id="KW-0804">Transcription</keyword>
<keyword id="KW-0808">Transferase</keyword>
<keyword id="KW-0862">Zinc</keyword>
<protein>
    <recommendedName>
        <fullName evidence="1">DNA-directed RNA polymerase subunit beta'</fullName>
        <shortName evidence="1">RNAP subunit beta'</shortName>
        <ecNumber evidence="1">2.7.7.6</ecNumber>
    </recommendedName>
    <alternativeName>
        <fullName evidence="1">RNA polymerase subunit beta'</fullName>
    </alternativeName>
    <alternativeName>
        <fullName evidence="1">Transcriptase subunit beta'</fullName>
    </alternativeName>
</protein>
<sequence length="1170" mass="130827">MLDLNNFDRIRIGLASPDQIRAWSSGEVKKPETINYRTLKPERDGLFCERIFGPTRDWECHCGKYKRVRYKGVVCDRCGVEVTRSKVRRERLGHIELAAPVSHIWYFKGIPSRMGLLLDMSPRALEKVLYFVSYIVTDPGDTGLIKKQLLTETEYRDCRERYGNAFKASMGAEAIKKLLEEINLEELARELRQELKEVTGQRKIRAIRRLEVVEAFRKSGNRPEWMILEVIPVISPELRPMVQLDGGRFATSDLNDLYRRVINRNNRLKRLLDLGAPDIIVRNEKRMLQEAVDALIDNGRRGRPVTGPGNRPLKSLSDMLKGKQGRFRQNLLGKRVDYSGRSVIVVGPELHLHQCGLPKEMALELFKPFVMKRLVNDGYAHNIKSAKRMVERVRPEVWEVLEEVIKEHPVLLNRAPTLHRLGIQAFEPVLVEGRAIQIHPMVCTAYNADFDGDQMAVHVPLSAEAQAEARLLMLSSNNILNPKDGRPVAIPTQDMVLGIYYLTVEKQGVPGEGKAFKDPEEAVMAYYNNAVSLHAAVKVRMPGMGRIETTVGRIIFNEVIPRELGYYNQVIDKKVLSKIVDDCYRKLGFSATSKLLDGIKKLGFTFATRAGVTIGIQDITIPARKKEILKEAEQQVEKVEQQYRRGLITEEERYRKVIGIWNDATKEVTDALIETLDKFNPVYMMANSGARGNIQQIRQLAGMRGLMADPSGRIIDLPIKANFREGLTVLEYFISTHGARKGLADTALRTADSGYLTRRLVDVAQDVIVREVDCGTGQGIEVTEIKDGNEVIEKLEDRIIGRVALEDVKHPETGEILAFAGEEITESEAAKIVAAGIKKVKIRSVLTCRTRYGVCIKCYGRNLATGRQVDIGEAVGIIAAQSIGEPGTQLTMRTFHTGGVAGDDITQGLPRVEELFEARRPKGQAIIAEADGTVEVREVKGRREIEVTAEDGTKSVYQVPYGARLKVRDGDRVYAGDELTEGSVNPHDLLKIKGVQGVQIYLLQEVQRVYRLQGVDINDKHIEVMIRQMLRKVKVDEPGDTDLLPGGLIDIFEFEDENRRIKNLGGEPATAKPVLLGITKASLATDSFLSAASFQETTRVLTEAAIKGKLDLLLGLKENVIIGKLVPAGTGMSRYRNISVVAESEPGEENGEPGGERLYGMDELYGETAN</sequence>
<gene>
    <name evidence="1" type="primary">rpoC</name>
    <name type="ordered locus">PTH_0313</name>
</gene>
<evidence type="ECO:0000255" key="1">
    <source>
        <dbReference type="HAMAP-Rule" id="MF_01322"/>
    </source>
</evidence>
<evidence type="ECO:0000256" key="2">
    <source>
        <dbReference type="SAM" id="MobiDB-lite"/>
    </source>
</evidence>
<name>RPOC_PELTS</name>
<feature type="chain" id="PRO_0000353403" description="DNA-directed RNA polymerase subunit beta'">
    <location>
        <begin position="1"/>
        <end position="1170"/>
    </location>
</feature>
<feature type="region of interest" description="Disordered" evidence="2">
    <location>
        <begin position="1145"/>
        <end position="1170"/>
    </location>
</feature>
<feature type="binding site" evidence="1">
    <location>
        <position position="60"/>
    </location>
    <ligand>
        <name>Zn(2+)</name>
        <dbReference type="ChEBI" id="CHEBI:29105"/>
        <label>1</label>
    </ligand>
</feature>
<feature type="binding site" evidence="1">
    <location>
        <position position="62"/>
    </location>
    <ligand>
        <name>Zn(2+)</name>
        <dbReference type="ChEBI" id="CHEBI:29105"/>
        <label>1</label>
    </ligand>
</feature>
<feature type="binding site" evidence="1">
    <location>
        <position position="75"/>
    </location>
    <ligand>
        <name>Zn(2+)</name>
        <dbReference type="ChEBI" id="CHEBI:29105"/>
        <label>1</label>
    </ligand>
</feature>
<feature type="binding site" evidence="1">
    <location>
        <position position="78"/>
    </location>
    <ligand>
        <name>Zn(2+)</name>
        <dbReference type="ChEBI" id="CHEBI:29105"/>
        <label>1</label>
    </ligand>
</feature>
<feature type="binding site" evidence="1">
    <location>
        <position position="449"/>
    </location>
    <ligand>
        <name>Mg(2+)</name>
        <dbReference type="ChEBI" id="CHEBI:18420"/>
    </ligand>
</feature>
<feature type="binding site" evidence="1">
    <location>
        <position position="451"/>
    </location>
    <ligand>
        <name>Mg(2+)</name>
        <dbReference type="ChEBI" id="CHEBI:18420"/>
    </ligand>
</feature>
<feature type="binding site" evidence="1">
    <location>
        <position position="453"/>
    </location>
    <ligand>
        <name>Mg(2+)</name>
        <dbReference type="ChEBI" id="CHEBI:18420"/>
    </ligand>
</feature>
<feature type="binding site" evidence="1">
    <location>
        <position position="774"/>
    </location>
    <ligand>
        <name>Zn(2+)</name>
        <dbReference type="ChEBI" id="CHEBI:29105"/>
        <label>2</label>
    </ligand>
</feature>
<feature type="binding site" evidence="1">
    <location>
        <position position="848"/>
    </location>
    <ligand>
        <name>Zn(2+)</name>
        <dbReference type="ChEBI" id="CHEBI:29105"/>
        <label>2</label>
    </ligand>
</feature>
<feature type="binding site" evidence="1">
    <location>
        <position position="855"/>
    </location>
    <ligand>
        <name>Zn(2+)</name>
        <dbReference type="ChEBI" id="CHEBI:29105"/>
        <label>2</label>
    </ligand>
</feature>
<feature type="binding site" evidence="1">
    <location>
        <position position="858"/>
    </location>
    <ligand>
        <name>Zn(2+)</name>
        <dbReference type="ChEBI" id="CHEBI:29105"/>
        <label>2</label>
    </ligand>
</feature>
<proteinExistence type="inferred from homology"/>
<accession>A5D5I3</accession>
<reference key="1">
    <citation type="journal article" date="2008" name="Genome Res.">
        <title>The genome of Pelotomaculum thermopropionicum reveals niche-associated evolution in anaerobic microbiota.</title>
        <authorList>
            <person name="Kosaka T."/>
            <person name="Kato S."/>
            <person name="Shimoyama T."/>
            <person name="Ishii S."/>
            <person name="Abe T."/>
            <person name="Watanabe K."/>
        </authorList>
    </citation>
    <scope>NUCLEOTIDE SEQUENCE [LARGE SCALE GENOMIC DNA]</scope>
    <source>
        <strain>DSM 13744 / JCM 10971 / SI</strain>
    </source>
</reference>